<reference key="1">
    <citation type="journal article" date="2004" name="Proc. Natl. Acad. Sci. U.S.A.">
        <title>Genome sequence of the deep-sea gamma-proteobacterium Idiomarina loihiensis reveals amino acid fermentation as a source of carbon and energy.</title>
        <authorList>
            <person name="Hou S."/>
            <person name="Saw J.H."/>
            <person name="Lee K.S."/>
            <person name="Freitas T.A."/>
            <person name="Belisle C."/>
            <person name="Kawarabayasi Y."/>
            <person name="Donachie S.P."/>
            <person name="Pikina A."/>
            <person name="Galperin M.Y."/>
            <person name="Koonin E.V."/>
            <person name="Makarova K.S."/>
            <person name="Omelchenko M.V."/>
            <person name="Sorokin A."/>
            <person name="Wolf Y.I."/>
            <person name="Li Q.X."/>
            <person name="Keum Y.S."/>
            <person name="Campbell S."/>
            <person name="Denery J."/>
            <person name="Aizawa S."/>
            <person name="Shibata S."/>
            <person name="Malahoff A."/>
            <person name="Alam M."/>
        </authorList>
    </citation>
    <scope>NUCLEOTIDE SEQUENCE [LARGE SCALE GENOMIC DNA]</scope>
    <source>
        <strain>ATCC BAA-735 / DSM 15497 / L2-TR</strain>
    </source>
</reference>
<name>UBIG_IDILO</name>
<feature type="chain" id="PRO_0000241710" description="Ubiquinone biosynthesis O-methyltransferase">
    <location>
        <begin position="1"/>
        <end position="243"/>
    </location>
</feature>
<feature type="binding site" evidence="1">
    <location>
        <position position="45"/>
    </location>
    <ligand>
        <name>S-adenosyl-L-methionine</name>
        <dbReference type="ChEBI" id="CHEBI:59789"/>
    </ligand>
</feature>
<feature type="binding site" evidence="1">
    <location>
        <position position="65"/>
    </location>
    <ligand>
        <name>S-adenosyl-L-methionine</name>
        <dbReference type="ChEBI" id="CHEBI:59789"/>
    </ligand>
</feature>
<feature type="binding site" evidence="1">
    <location>
        <position position="86"/>
    </location>
    <ligand>
        <name>S-adenosyl-L-methionine</name>
        <dbReference type="ChEBI" id="CHEBI:59789"/>
    </ligand>
</feature>
<feature type="binding site" evidence="1">
    <location>
        <position position="130"/>
    </location>
    <ligand>
        <name>S-adenosyl-L-methionine</name>
        <dbReference type="ChEBI" id="CHEBI:59789"/>
    </ligand>
</feature>
<organism>
    <name type="scientific">Idiomarina loihiensis (strain ATCC BAA-735 / DSM 15497 / L2-TR)</name>
    <dbReference type="NCBI Taxonomy" id="283942"/>
    <lineage>
        <taxon>Bacteria</taxon>
        <taxon>Pseudomonadati</taxon>
        <taxon>Pseudomonadota</taxon>
        <taxon>Gammaproteobacteria</taxon>
        <taxon>Alteromonadales</taxon>
        <taxon>Idiomarinaceae</taxon>
        <taxon>Idiomarina</taxon>
    </lineage>
</organism>
<proteinExistence type="inferred from homology"/>
<evidence type="ECO:0000255" key="1">
    <source>
        <dbReference type="HAMAP-Rule" id="MF_00472"/>
    </source>
</evidence>
<keyword id="KW-0489">Methyltransferase</keyword>
<keyword id="KW-1185">Reference proteome</keyword>
<keyword id="KW-0949">S-adenosyl-L-methionine</keyword>
<keyword id="KW-0808">Transferase</keyword>
<keyword id="KW-0831">Ubiquinone biosynthesis</keyword>
<sequence>MTTSRSKSEQKNVDPEEIAKFSALASRWWDPDGEFKPLHKINPVRLGFIENHTDGLFGKKVLDVGCGGGLLSEAMAERGAQVTGVDLAEQSLKVARLHALESGRQIDYQCIAIETLADQQPASFDVVTCLEMLEHVPDPKAIVKACAKALKPGGKIFFSTLNRNVKSWLLGIVAAEHVLGWVPKGTHQHQRFIKPSELLRMTDAAALEDIAINGLIFNPLKGFVLSEKDVDVNYIIALKKPES</sequence>
<dbReference type="EC" id="2.1.1.222" evidence="1"/>
<dbReference type="EC" id="2.1.1.64" evidence="1"/>
<dbReference type="EMBL" id="AE017340">
    <property type="protein sequence ID" value="AAV82201.1"/>
    <property type="molecule type" value="Genomic_DNA"/>
</dbReference>
<dbReference type="RefSeq" id="WP_011234607.1">
    <property type="nucleotide sequence ID" value="NC_006512.1"/>
</dbReference>
<dbReference type="SMR" id="Q5QZ53"/>
<dbReference type="STRING" id="283942.IL1361"/>
<dbReference type="GeneID" id="41336537"/>
<dbReference type="KEGG" id="ilo:IL1361"/>
<dbReference type="eggNOG" id="COG2227">
    <property type="taxonomic scope" value="Bacteria"/>
</dbReference>
<dbReference type="HOGENOM" id="CLU_042432_5_0_6"/>
<dbReference type="OrthoDB" id="9801538at2"/>
<dbReference type="UniPathway" id="UPA00232"/>
<dbReference type="Proteomes" id="UP000001171">
    <property type="component" value="Chromosome"/>
</dbReference>
<dbReference type="GO" id="GO:0102208">
    <property type="term" value="F:2-polyprenyl-6-hydroxyphenol methylase activity"/>
    <property type="evidence" value="ECO:0007669"/>
    <property type="project" value="UniProtKB-EC"/>
</dbReference>
<dbReference type="GO" id="GO:0061542">
    <property type="term" value="F:3-demethylubiquinol 3-O-methyltransferase activity"/>
    <property type="evidence" value="ECO:0007669"/>
    <property type="project" value="UniProtKB-UniRule"/>
</dbReference>
<dbReference type="GO" id="GO:0010420">
    <property type="term" value="F:polyprenyldihydroxybenzoate methyltransferase activity"/>
    <property type="evidence" value="ECO:0007669"/>
    <property type="project" value="InterPro"/>
</dbReference>
<dbReference type="GO" id="GO:0032259">
    <property type="term" value="P:methylation"/>
    <property type="evidence" value="ECO:0007669"/>
    <property type="project" value="UniProtKB-KW"/>
</dbReference>
<dbReference type="CDD" id="cd02440">
    <property type="entry name" value="AdoMet_MTases"/>
    <property type="match status" value="1"/>
</dbReference>
<dbReference type="FunFam" id="3.40.50.150:FF:000028">
    <property type="entry name" value="Ubiquinone biosynthesis O-methyltransferase"/>
    <property type="match status" value="1"/>
</dbReference>
<dbReference type="Gene3D" id="3.40.50.150">
    <property type="entry name" value="Vaccinia Virus protein VP39"/>
    <property type="match status" value="1"/>
</dbReference>
<dbReference type="HAMAP" id="MF_00472">
    <property type="entry name" value="UbiG"/>
    <property type="match status" value="1"/>
</dbReference>
<dbReference type="InterPro" id="IPR013216">
    <property type="entry name" value="Methyltransf_11"/>
</dbReference>
<dbReference type="InterPro" id="IPR029063">
    <property type="entry name" value="SAM-dependent_MTases_sf"/>
</dbReference>
<dbReference type="InterPro" id="IPR010233">
    <property type="entry name" value="UbiG_MeTrfase"/>
</dbReference>
<dbReference type="NCBIfam" id="TIGR01983">
    <property type="entry name" value="UbiG"/>
    <property type="match status" value="1"/>
</dbReference>
<dbReference type="PANTHER" id="PTHR43464">
    <property type="entry name" value="METHYLTRANSFERASE"/>
    <property type="match status" value="1"/>
</dbReference>
<dbReference type="PANTHER" id="PTHR43464:SF19">
    <property type="entry name" value="UBIQUINONE BIOSYNTHESIS O-METHYLTRANSFERASE, MITOCHONDRIAL"/>
    <property type="match status" value="1"/>
</dbReference>
<dbReference type="Pfam" id="PF08241">
    <property type="entry name" value="Methyltransf_11"/>
    <property type="match status" value="1"/>
</dbReference>
<dbReference type="SUPFAM" id="SSF53335">
    <property type="entry name" value="S-adenosyl-L-methionine-dependent methyltransferases"/>
    <property type="match status" value="1"/>
</dbReference>
<gene>
    <name evidence="1" type="primary">ubiG</name>
    <name type="ordered locus">IL1361</name>
</gene>
<protein>
    <recommendedName>
        <fullName evidence="1">Ubiquinone biosynthesis O-methyltransferase</fullName>
    </recommendedName>
    <alternativeName>
        <fullName evidence="1">2-polyprenyl-6-hydroxyphenol methylase</fullName>
        <ecNumber evidence="1">2.1.1.222</ecNumber>
    </alternativeName>
    <alternativeName>
        <fullName evidence="1">3-demethylubiquinone 3-O-methyltransferase</fullName>
        <ecNumber evidence="1">2.1.1.64</ecNumber>
    </alternativeName>
</protein>
<accession>Q5QZ53</accession>
<comment type="function">
    <text evidence="1">O-methyltransferase that catalyzes the 2 O-methylation steps in the ubiquinone biosynthetic pathway.</text>
</comment>
<comment type="catalytic activity">
    <reaction evidence="1">
        <text>a 3-demethylubiquinol + S-adenosyl-L-methionine = a ubiquinol + S-adenosyl-L-homocysteine + H(+)</text>
        <dbReference type="Rhea" id="RHEA:44380"/>
        <dbReference type="Rhea" id="RHEA-COMP:9566"/>
        <dbReference type="Rhea" id="RHEA-COMP:10914"/>
        <dbReference type="ChEBI" id="CHEBI:15378"/>
        <dbReference type="ChEBI" id="CHEBI:17976"/>
        <dbReference type="ChEBI" id="CHEBI:57856"/>
        <dbReference type="ChEBI" id="CHEBI:59789"/>
        <dbReference type="ChEBI" id="CHEBI:84422"/>
        <dbReference type="EC" id="2.1.1.64"/>
    </reaction>
</comment>
<comment type="catalytic activity">
    <reaction evidence="1">
        <text>a 3-(all-trans-polyprenyl)benzene-1,2-diol + S-adenosyl-L-methionine = a 2-methoxy-6-(all-trans-polyprenyl)phenol + S-adenosyl-L-homocysteine + H(+)</text>
        <dbReference type="Rhea" id="RHEA:31411"/>
        <dbReference type="Rhea" id="RHEA-COMP:9550"/>
        <dbReference type="Rhea" id="RHEA-COMP:9551"/>
        <dbReference type="ChEBI" id="CHEBI:15378"/>
        <dbReference type="ChEBI" id="CHEBI:57856"/>
        <dbReference type="ChEBI" id="CHEBI:59789"/>
        <dbReference type="ChEBI" id="CHEBI:62729"/>
        <dbReference type="ChEBI" id="CHEBI:62731"/>
        <dbReference type="EC" id="2.1.1.222"/>
    </reaction>
</comment>
<comment type="pathway">
    <text evidence="1">Cofactor biosynthesis; ubiquinone biosynthesis.</text>
</comment>
<comment type="similarity">
    <text evidence="1">Belongs to the methyltransferase superfamily. UbiG/COQ3 family.</text>
</comment>